<feature type="chain" id="PRO_0000360129" description="Tryptophan 2,3-dioxygenase">
    <location>
        <begin position="1"/>
        <end position="278"/>
    </location>
</feature>
<feature type="binding site" evidence="1">
    <location>
        <begin position="47"/>
        <end position="51"/>
    </location>
    <ligand>
        <name>substrate</name>
    </ligand>
</feature>
<feature type="binding site" evidence="1">
    <location>
        <position position="109"/>
    </location>
    <ligand>
        <name>substrate</name>
    </ligand>
</feature>
<feature type="binding site" evidence="1">
    <location>
        <position position="113"/>
    </location>
    <ligand>
        <name>substrate</name>
    </ligand>
</feature>
<feature type="binding site" description="axial binding residue" evidence="1">
    <location>
        <position position="236"/>
    </location>
    <ligand>
        <name>heme</name>
        <dbReference type="ChEBI" id="CHEBI:30413"/>
    </ligand>
    <ligandPart>
        <name>Fe</name>
        <dbReference type="ChEBI" id="CHEBI:18248"/>
    </ligandPart>
</feature>
<feature type="binding site" evidence="1">
    <location>
        <position position="250"/>
    </location>
    <ligand>
        <name>substrate</name>
    </ligand>
</feature>
<gene>
    <name evidence="1" type="primary">kynA</name>
    <name type="ordered locus">Rpic_0708</name>
</gene>
<evidence type="ECO:0000255" key="1">
    <source>
        <dbReference type="HAMAP-Rule" id="MF_01972"/>
    </source>
</evidence>
<keyword id="KW-0223">Dioxygenase</keyword>
<keyword id="KW-0349">Heme</keyword>
<keyword id="KW-0408">Iron</keyword>
<keyword id="KW-0479">Metal-binding</keyword>
<keyword id="KW-0560">Oxidoreductase</keyword>
<keyword id="KW-0823">Tryptophan catabolism</keyword>
<sequence>MQAAQGEGWHDAQLDFSKSMSYGDYLALDQILNAQHPRSPDHNEMLFIVQHQTTELWMKLMLHELRAARDCVRNDNLPPAFKMLARVSRIMDQLVQAWNVLATMTPPEYSAMRPHLGQSSGFQSYQYREIEFILGNKNAAMLKPHAHRTEHYEQVKAALETPSLYDEAVRYMARHGFAFDADCIERDWSRPVTYNASVEAAWLEVYRDPTHHWELYELAEKFVDLEDAFRQWRFRHVTTVERVIGFKRGTGGTEGVGYLRKMLDVVLFPELWKLRTDL</sequence>
<accession>B2U7J7</accession>
<comment type="function">
    <text evidence="1">Heme-dependent dioxygenase that catalyzes the oxidative cleavage of the L-tryptophan (L-Trp) pyrrole ring and converts L-tryptophan to N-formyl-L-kynurenine. Catalyzes the oxidative cleavage of the indole moiety.</text>
</comment>
<comment type="catalytic activity">
    <reaction evidence="1">
        <text>L-tryptophan + O2 = N-formyl-L-kynurenine</text>
        <dbReference type="Rhea" id="RHEA:24536"/>
        <dbReference type="ChEBI" id="CHEBI:15379"/>
        <dbReference type="ChEBI" id="CHEBI:57912"/>
        <dbReference type="ChEBI" id="CHEBI:58629"/>
        <dbReference type="EC" id="1.13.11.11"/>
    </reaction>
</comment>
<comment type="cofactor">
    <cofactor evidence="1">
        <name>heme</name>
        <dbReference type="ChEBI" id="CHEBI:30413"/>
    </cofactor>
    <text evidence="1">Binds 1 heme group per subunit.</text>
</comment>
<comment type="pathway">
    <text evidence="1">Amino-acid degradation; L-tryptophan degradation via kynurenine pathway; L-kynurenine from L-tryptophan: step 1/2.</text>
</comment>
<comment type="subunit">
    <text evidence="1">Homotetramer.</text>
</comment>
<comment type="similarity">
    <text evidence="1">Belongs to the tryptophan 2,3-dioxygenase family.</text>
</comment>
<dbReference type="EC" id="1.13.11.11" evidence="1"/>
<dbReference type="EMBL" id="CP001068">
    <property type="protein sequence ID" value="ACD25859.1"/>
    <property type="molecule type" value="Genomic_DNA"/>
</dbReference>
<dbReference type="SMR" id="B2U7J7"/>
<dbReference type="STRING" id="402626.Rpic_0708"/>
<dbReference type="KEGG" id="rpi:Rpic_0708"/>
<dbReference type="eggNOG" id="COG3483">
    <property type="taxonomic scope" value="Bacteria"/>
</dbReference>
<dbReference type="HOGENOM" id="CLU_063240_0_0_4"/>
<dbReference type="UniPathway" id="UPA00333">
    <property type="reaction ID" value="UER00453"/>
</dbReference>
<dbReference type="GO" id="GO:0020037">
    <property type="term" value="F:heme binding"/>
    <property type="evidence" value="ECO:0000250"/>
    <property type="project" value="UniProtKB"/>
</dbReference>
<dbReference type="GO" id="GO:0046872">
    <property type="term" value="F:metal ion binding"/>
    <property type="evidence" value="ECO:0007669"/>
    <property type="project" value="UniProtKB-KW"/>
</dbReference>
<dbReference type="GO" id="GO:0004833">
    <property type="term" value="F:tryptophan 2,3-dioxygenase activity"/>
    <property type="evidence" value="ECO:0000250"/>
    <property type="project" value="UniProtKB"/>
</dbReference>
<dbReference type="GO" id="GO:0019442">
    <property type="term" value="P:L-tryptophan catabolic process to acetyl-CoA"/>
    <property type="evidence" value="ECO:0007669"/>
    <property type="project" value="TreeGrafter"/>
</dbReference>
<dbReference type="GO" id="GO:0019441">
    <property type="term" value="P:L-tryptophan catabolic process to kynurenine"/>
    <property type="evidence" value="ECO:0000250"/>
    <property type="project" value="UniProtKB"/>
</dbReference>
<dbReference type="FunFam" id="1.20.58.480:FF:000001">
    <property type="entry name" value="Tryptophan 2,3-dioxygenase"/>
    <property type="match status" value="1"/>
</dbReference>
<dbReference type="Gene3D" id="1.20.58.480">
    <property type="match status" value="1"/>
</dbReference>
<dbReference type="HAMAP" id="MF_01972">
    <property type="entry name" value="T23O"/>
    <property type="match status" value="1"/>
</dbReference>
<dbReference type="InterPro" id="IPR037217">
    <property type="entry name" value="Trp/Indoleamine_2_3_dOase-like"/>
</dbReference>
<dbReference type="InterPro" id="IPR017485">
    <property type="entry name" value="Trp_2-3-dOase_bac"/>
</dbReference>
<dbReference type="InterPro" id="IPR004981">
    <property type="entry name" value="Trp_2_3_dOase"/>
</dbReference>
<dbReference type="NCBIfam" id="TIGR03036">
    <property type="entry name" value="trp_2_3_diox"/>
    <property type="match status" value="1"/>
</dbReference>
<dbReference type="PANTHER" id="PTHR10138">
    <property type="entry name" value="TRYPTOPHAN 2,3-DIOXYGENASE"/>
    <property type="match status" value="1"/>
</dbReference>
<dbReference type="PANTHER" id="PTHR10138:SF0">
    <property type="entry name" value="TRYPTOPHAN 2,3-DIOXYGENASE"/>
    <property type="match status" value="1"/>
</dbReference>
<dbReference type="Pfam" id="PF03301">
    <property type="entry name" value="Trp_dioxygenase"/>
    <property type="match status" value="1"/>
</dbReference>
<dbReference type="SUPFAM" id="SSF140959">
    <property type="entry name" value="Indolic compounds 2,3-dioxygenase-like"/>
    <property type="match status" value="1"/>
</dbReference>
<reference key="1">
    <citation type="submission" date="2008-05" db="EMBL/GenBank/DDBJ databases">
        <title>Complete sequence of chromosome 1 of Ralstonia pickettii 12J.</title>
        <authorList>
            <person name="Lucas S."/>
            <person name="Copeland A."/>
            <person name="Lapidus A."/>
            <person name="Glavina del Rio T."/>
            <person name="Dalin E."/>
            <person name="Tice H."/>
            <person name="Bruce D."/>
            <person name="Goodwin L."/>
            <person name="Pitluck S."/>
            <person name="Meincke L."/>
            <person name="Brettin T."/>
            <person name="Detter J.C."/>
            <person name="Han C."/>
            <person name="Kuske C.R."/>
            <person name="Schmutz J."/>
            <person name="Larimer F."/>
            <person name="Land M."/>
            <person name="Hauser L."/>
            <person name="Kyrpides N."/>
            <person name="Mikhailova N."/>
            <person name="Marsh T."/>
            <person name="Richardson P."/>
        </authorList>
    </citation>
    <scope>NUCLEOTIDE SEQUENCE [LARGE SCALE GENOMIC DNA]</scope>
    <source>
        <strain>12J</strain>
    </source>
</reference>
<organism>
    <name type="scientific">Ralstonia pickettii (strain 12J)</name>
    <dbReference type="NCBI Taxonomy" id="402626"/>
    <lineage>
        <taxon>Bacteria</taxon>
        <taxon>Pseudomonadati</taxon>
        <taxon>Pseudomonadota</taxon>
        <taxon>Betaproteobacteria</taxon>
        <taxon>Burkholderiales</taxon>
        <taxon>Burkholderiaceae</taxon>
        <taxon>Ralstonia</taxon>
    </lineage>
</organism>
<proteinExistence type="inferred from homology"/>
<protein>
    <recommendedName>
        <fullName evidence="1">Tryptophan 2,3-dioxygenase</fullName>
        <shortName evidence="1">TDO</shortName>
        <ecNumber evidence="1">1.13.11.11</ecNumber>
    </recommendedName>
    <alternativeName>
        <fullName evidence="1">Tryptamin 2,3-dioxygenase</fullName>
    </alternativeName>
    <alternativeName>
        <fullName evidence="1">Tryptophan oxygenase</fullName>
        <shortName evidence="1">TO</shortName>
        <shortName evidence="1">TRPO</shortName>
    </alternativeName>
    <alternativeName>
        <fullName evidence="1">Tryptophan pyrrolase</fullName>
    </alternativeName>
    <alternativeName>
        <fullName evidence="1">Tryptophanase</fullName>
    </alternativeName>
</protein>
<name>T23O_RALPJ</name>